<protein>
    <recommendedName>
        <fullName evidence="1">Small ribosomal subunit protein uS2</fullName>
    </recommendedName>
    <alternativeName>
        <fullName evidence="2">30S ribosomal protein S2</fullName>
    </alternativeName>
</protein>
<evidence type="ECO:0000255" key="1">
    <source>
        <dbReference type="HAMAP-Rule" id="MF_00291"/>
    </source>
</evidence>
<evidence type="ECO:0000305" key="2"/>
<proteinExistence type="inferred from homology"/>
<dbReference type="EMBL" id="CP000770">
    <property type="protein sequence ID" value="ABS30503.1"/>
    <property type="molecule type" value="Genomic_DNA"/>
</dbReference>
<dbReference type="SMR" id="A8Z5V2"/>
<dbReference type="STRING" id="444179.SMGWSS_088"/>
<dbReference type="KEGG" id="smg:SMGWSS_088"/>
<dbReference type="HOGENOM" id="CLU_040318_1_2_10"/>
<dbReference type="Proteomes" id="UP000000781">
    <property type="component" value="Chromosome"/>
</dbReference>
<dbReference type="GO" id="GO:0022627">
    <property type="term" value="C:cytosolic small ribosomal subunit"/>
    <property type="evidence" value="ECO:0007669"/>
    <property type="project" value="TreeGrafter"/>
</dbReference>
<dbReference type="GO" id="GO:0003735">
    <property type="term" value="F:structural constituent of ribosome"/>
    <property type="evidence" value="ECO:0007669"/>
    <property type="project" value="InterPro"/>
</dbReference>
<dbReference type="GO" id="GO:0006412">
    <property type="term" value="P:translation"/>
    <property type="evidence" value="ECO:0007669"/>
    <property type="project" value="UniProtKB-UniRule"/>
</dbReference>
<dbReference type="CDD" id="cd01425">
    <property type="entry name" value="RPS2"/>
    <property type="match status" value="1"/>
</dbReference>
<dbReference type="Gene3D" id="3.40.50.10490">
    <property type="entry name" value="Glucose-6-phosphate isomerase like protein, domain 1"/>
    <property type="match status" value="1"/>
</dbReference>
<dbReference type="Gene3D" id="1.10.287.610">
    <property type="entry name" value="Helix hairpin bin"/>
    <property type="match status" value="1"/>
</dbReference>
<dbReference type="HAMAP" id="MF_00291_B">
    <property type="entry name" value="Ribosomal_uS2_B"/>
    <property type="match status" value="1"/>
</dbReference>
<dbReference type="InterPro" id="IPR001865">
    <property type="entry name" value="Ribosomal_uS2"/>
</dbReference>
<dbReference type="InterPro" id="IPR005706">
    <property type="entry name" value="Ribosomal_uS2_bac/mit/plastid"/>
</dbReference>
<dbReference type="InterPro" id="IPR023591">
    <property type="entry name" value="Ribosomal_uS2_flav_dom_sf"/>
</dbReference>
<dbReference type="NCBIfam" id="TIGR01011">
    <property type="entry name" value="rpsB_bact"/>
    <property type="match status" value="1"/>
</dbReference>
<dbReference type="PANTHER" id="PTHR12534">
    <property type="entry name" value="30S RIBOSOMAL PROTEIN S2 PROKARYOTIC AND ORGANELLAR"/>
    <property type="match status" value="1"/>
</dbReference>
<dbReference type="PANTHER" id="PTHR12534:SF0">
    <property type="entry name" value="SMALL RIBOSOMAL SUBUNIT PROTEIN US2M"/>
    <property type="match status" value="1"/>
</dbReference>
<dbReference type="Pfam" id="PF00318">
    <property type="entry name" value="Ribosomal_S2"/>
    <property type="match status" value="1"/>
</dbReference>
<dbReference type="PRINTS" id="PR00395">
    <property type="entry name" value="RIBOSOMALS2"/>
</dbReference>
<dbReference type="SUPFAM" id="SSF52313">
    <property type="entry name" value="Ribosomal protein S2"/>
    <property type="match status" value="1"/>
</dbReference>
<comment type="similarity">
    <text evidence="1">Belongs to the universal ribosomal protein uS2 family.</text>
</comment>
<accession>A8Z5V2</accession>
<sequence length="222" mass="25235">MYNIEKFIKVGAHFGHTTSKWNPNMRKYIFMKKGGIHIIDISKTIKKINEACKFIKNIVSSGKKILFVATKKQAKDIVSDYAKKVNMPYITERWLGGILTNMSTIRQSVKKMNVIDRQKIDGTYNMMSKKEKLLIDRLKNKLKKNIGSISKMNSLPACVIIVDVKKEKIAVKECINLCIPIIGIVDTNCDPRNIDYPIPANDDSSKSIHLIISYLTNSILTN</sequence>
<feature type="chain" id="PRO_0000352043" description="Small ribosomal subunit protein uS2">
    <location>
        <begin position="1"/>
        <end position="222"/>
    </location>
</feature>
<name>RS2_KARMG</name>
<reference key="1">
    <citation type="journal article" date="2007" name="Proc. Natl. Acad. Sci. U.S.A.">
        <title>Parallel genomic evolution and metabolic interdependence in an ancient symbiosis.</title>
        <authorList>
            <person name="McCutcheon J.P."/>
            <person name="Moran N.A."/>
        </authorList>
    </citation>
    <scope>NUCLEOTIDE SEQUENCE [LARGE SCALE GENOMIC DNA]</scope>
    <source>
        <strain>GWSS</strain>
    </source>
</reference>
<keyword id="KW-0687">Ribonucleoprotein</keyword>
<keyword id="KW-0689">Ribosomal protein</keyword>
<gene>
    <name evidence="1" type="primary">rpsB</name>
    <name type="ordered locus">SMGWSS_088</name>
</gene>
<organism>
    <name type="scientific">Karelsulcia muelleri (strain GWSS)</name>
    <name type="common">Sulcia muelleri</name>
    <dbReference type="NCBI Taxonomy" id="444179"/>
    <lineage>
        <taxon>Bacteria</taxon>
        <taxon>Pseudomonadati</taxon>
        <taxon>Bacteroidota</taxon>
        <taxon>Flavobacteriia</taxon>
        <taxon>Flavobacteriales</taxon>
        <taxon>Candidatus Karelsulcia</taxon>
    </lineage>
</organism>